<feature type="chain" id="PRO_1000204546" description="Large ribosomal subunit protein bL36">
    <location>
        <begin position="1"/>
        <end position="37"/>
    </location>
</feature>
<sequence>MKVRASVKKICKDCKIIRRKGVIRVICITKRHNQRQG</sequence>
<proteinExistence type="inferred from homology"/>
<gene>
    <name evidence="1" type="primary">rpmJ</name>
    <name type="ordered locus">HRM2_36040</name>
</gene>
<organism>
    <name type="scientific">Desulforapulum autotrophicum (strain ATCC 43914 / DSM 3382 / VKM B-1955 / HRM2)</name>
    <name type="common">Desulfobacterium autotrophicum</name>
    <dbReference type="NCBI Taxonomy" id="177437"/>
    <lineage>
        <taxon>Bacteria</taxon>
        <taxon>Pseudomonadati</taxon>
        <taxon>Thermodesulfobacteriota</taxon>
        <taxon>Desulfobacteria</taxon>
        <taxon>Desulfobacterales</taxon>
        <taxon>Desulfobacteraceae</taxon>
        <taxon>Desulforapulum</taxon>
    </lineage>
</organism>
<keyword id="KW-1185">Reference proteome</keyword>
<keyword id="KW-0687">Ribonucleoprotein</keyword>
<keyword id="KW-0689">Ribosomal protein</keyword>
<name>RL36_DESAH</name>
<protein>
    <recommendedName>
        <fullName evidence="1">Large ribosomal subunit protein bL36</fullName>
    </recommendedName>
    <alternativeName>
        <fullName evidence="2">50S ribosomal protein L36</fullName>
    </alternativeName>
</protein>
<accession>C0Q9V1</accession>
<dbReference type="EMBL" id="CP001087">
    <property type="protein sequence ID" value="ACN16669.1"/>
    <property type="molecule type" value="Genomic_DNA"/>
</dbReference>
<dbReference type="RefSeq" id="WP_015905419.1">
    <property type="nucleotide sequence ID" value="NC_012108.1"/>
</dbReference>
<dbReference type="SMR" id="C0Q9V1"/>
<dbReference type="STRING" id="177437.HRM2_36040"/>
<dbReference type="KEGG" id="dat:HRM2_36040"/>
<dbReference type="eggNOG" id="COG0257">
    <property type="taxonomic scope" value="Bacteria"/>
</dbReference>
<dbReference type="HOGENOM" id="CLU_135723_6_2_7"/>
<dbReference type="Proteomes" id="UP000000442">
    <property type="component" value="Chromosome"/>
</dbReference>
<dbReference type="GO" id="GO:0005737">
    <property type="term" value="C:cytoplasm"/>
    <property type="evidence" value="ECO:0007669"/>
    <property type="project" value="UniProtKB-ARBA"/>
</dbReference>
<dbReference type="GO" id="GO:1990904">
    <property type="term" value="C:ribonucleoprotein complex"/>
    <property type="evidence" value="ECO:0007669"/>
    <property type="project" value="UniProtKB-KW"/>
</dbReference>
<dbReference type="GO" id="GO:0005840">
    <property type="term" value="C:ribosome"/>
    <property type="evidence" value="ECO:0007669"/>
    <property type="project" value="UniProtKB-KW"/>
</dbReference>
<dbReference type="GO" id="GO:0003735">
    <property type="term" value="F:structural constituent of ribosome"/>
    <property type="evidence" value="ECO:0007669"/>
    <property type="project" value="InterPro"/>
</dbReference>
<dbReference type="GO" id="GO:0006412">
    <property type="term" value="P:translation"/>
    <property type="evidence" value="ECO:0007669"/>
    <property type="project" value="UniProtKB-UniRule"/>
</dbReference>
<dbReference type="HAMAP" id="MF_00251">
    <property type="entry name" value="Ribosomal_bL36"/>
    <property type="match status" value="1"/>
</dbReference>
<dbReference type="InterPro" id="IPR000473">
    <property type="entry name" value="Ribosomal_bL36"/>
</dbReference>
<dbReference type="InterPro" id="IPR035977">
    <property type="entry name" value="Ribosomal_bL36_sp"/>
</dbReference>
<dbReference type="NCBIfam" id="TIGR01022">
    <property type="entry name" value="rpmJ_bact"/>
    <property type="match status" value="1"/>
</dbReference>
<dbReference type="PANTHER" id="PTHR42888">
    <property type="entry name" value="50S RIBOSOMAL PROTEIN L36, CHLOROPLASTIC"/>
    <property type="match status" value="1"/>
</dbReference>
<dbReference type="PANTHER" id="PTHR42888:SF1">
    <property type="entry name" value="LARGE RIBOSOMAL SUBUNIT PROTEIN BL36C"/>
    <property type="match status" value="1"/>
</dbReference>
<dbReference type="Pfam" id="PF00444">
    <property type="entry name" value="Ribosomal_L36"/>
    <property type="match status" value="1"/>
</dbReference>
<dbReference type="SUPFAM" id="SSF57840">
    <property type="entry name" value="Ribosomal protein L36"/>
    <property type="match status" value="1"/>
</dbReference>
<dbReference type="PROSITE" id="PS00828">
    <property type="entry name" value="RIBOSOMAL_L36"/>
    <property type="match status" value="1"/>
</dbReference>
<evidence type="ECO:0000255" key="1">
    <source>
        <dbReference type="HAMAP-Rule" id="MF_00251"/>
    </source>
</evidence>
<evidence type="ECO:0000305" key="2"/>
<reference key="1">
    <citation type="journal article" date="2009" name="Environ. Microbiol.">
        <title>Genome sequence of Desulfobacterium autotrophicum HRM2, a marine sulfate reducer oxidizing organic carbon completely to carbon dioxide.</title>
        <authorList>
            <person name="Strittmatter A.W."/>
            <person name="Liesegang H."/>
            <person name="Rabus R."/>
            <person name="Decker I."/>
            <person name="Amann J."/>
            <person name="Andres S."/>
            <person name="Henne A."/>
            <person name="Fricke W.F."/>
            <person name="Martinez-Arias R."/>
            <person name="Bartels D."/>
            <person name="Goesmann A."/>
            <person name="Krause L."/>
            <person name="Puehler A."/>
            <person name="Klenk H.P."/>
            <person name="Richter M."/>
            <person name="Schuler M."/>
            <person name="Gloeckner F.O."/>
            <person name="Meyerdierks A."/>
            <person name="Gottschalk G."/>
            <person name="Amann R."/>
        </authorList>
    </citation>
    <scope>NUCLEOTIDE SEQUENCE [LARGE SCALE GENOMIC DNA]</scope>
    <source>
        <strain>ATCC 43914 / DSM 3382 / VKM B-1955 / HRM2</strain>
    </source>
</reference>
<comment type="similarity">
    <text evidence="1">Belongs to the bacterial ribosomal protein bL36 family.</text>
</comment>